<organism>
    <name type="scientific">Syntrophomonas wolfei subsp. wolfei (strain DSM 2245B / Goettingen)</name>
    <dbReference type="NCBI Taxonomy" id="335541"/>
    <lineage>
        <taxon>Bacteria</taxon>
        <taxon>Bacillati</taxon>
        <taxon>Bacillota</taxon>
        <taxon>Clostridia</taxon>
        <taxon>Eubacteriales</taxon>
        <taxon>Syntrophomonadaceae</taxon>
        <taxon>Syntrophomonas</taxon>
    </lineage>
</organism>
<gene>
    <name evidence="1" type="primary">gcvH</name>
    <name type="ordered locus">Swol_1982</name>
</gene>
<name>GCSH_SYNWW</name>
<keyword id="KW-0450">Lipoyl</keyword>
<keyword id="KW-1185">Reference proteome</keyword>
<reference key="1">
    <citation type="journal article" date="2010" name="Environ. Microbiol.">
        <title>The genome of Syntrophomonas wolfei: new insights into syntrophic metabolism and biohydrogen production.</title>
        <authorList>
            <person name="Sieber J.R."/>
            <person name="Sims D.R."/>
            <person name="Han C."/>
            <person name="Kim E."/>
            <person name="Lykidis A."/>
            <person name="Lapidus A.L."/>
            <person name="McDonnald E."/>
            <person name="Rohlin L."/>
            <person name="Culley D.E."/>
            <person name="Gunsalus R."/>
            <person name="McInerney M.J."/>
        </authorList>
    </citation>
    <scope>NUCLEOTIDE SEQUENCE [LARGE SCALE GENOMIC DNA]</scope>
    <source>
        <strain>DSM 2245B / Goettingen</strain>
    </source>
</reference>
<dbReference type="EMBL" id="CP000448">
    <property type="protein sequence ID" value="ABI69277.1"/>
    <property type="molecule type" value="Genomic_DNA"/>
</dbReference>
<dbReference type="RefSeq" id="WP_011641369.1">
    <property type="nucleotide sequence ID" value="NC_008346.1"/>
</dbReference>
<dbReference type="SMR" id="Q0AVH7"/>
<dbReference type="STRING" id="335541.Swol_1982"/>
<dbReference type="KEGG" id="swo:Swol_1982"/>
<dbReference type="eggNOG" id="COG0509">
    <property type="taxonomic scope" value="Bacteria"/>
</dbReference>
<dbReference type="HOGENOM" id="CLU_097408_2_2_9"/>
<dbReference type="OrthoDB" id="9796712at2"/>
<dbReference type="Proteomes" id="UP000001968">
    <property type="component" value="Chromosome"/>
</dbReference>
<dbReference type="GO" id="GO:0005829">
    <property type="term" value="C:cytosol"/>
    <property type="evidence" value="ECO:0007669"/>
    <property type="project" value="TreeGrafter"/>
</dbReference>
<dbReference type="GO" id="GO:0005960">
    <property type="term" value="C:glycine cleavage complex"/>
    <property type="evidence" value="ECO:0007669"/>
    <property type="project" value="InterPro"/>
</dbReference>
<dbReference type="GO" id="GO:0019464">
    <property type="term" value="P:glycine decarboxylation via glycine cleavage system"/>
    <property type="evidence" value="ECO:0007669"/>
    <property type="project" value="UniProtKB-UniRule"/>
</dbReference>
<dbReference type="CDD" id="cd06848">
    <property type="entry name" value="GCS_H"/>
    <property type="match status" value="1"/>
</dbReference>
<dbReference type="Gene3D" id="2.40.50.100">
    <property type="match status" value="1"/>
</dbReference>
<dbReference type="HAMAP" id="MF_00272">
    <property type="entry name" value="GcvH"/>
    <property type="match status" value="1"/>
</dbReference>
<dbReference type="InterPro" id="IPR003016">
    <property type="entry name" value="2-oxoA_DH_lipoyl-BS"/>
</dbReference>
<dbReference type="InterPro" id="IPR000089">
    <property type="entry name" value="Biotin_lipoyl"/>
</dbReference>
<dbReference type="InterPro" id="IPR002930">
    <property type="entry name" value="GCV_H"/>
</dbReference>
<dbReference type="InterPro" id="IPR033753">
    <property type="entry name" value="GCV_H/Fam206"/>
</dbReference>
<dbReference type="InterPro" id="IPR017453">
    <property type="entry name" value="GCV_H_sub"/>
</dbReference>
<dbReference type="InterPro" id="IPR011053">
    <property type="entry name" value="Single_hybrid_motif"/>
</dbReference>
<dbReference type="NCBIfam" id="TIGR00527">
    <property type="entry name" value="gcvH"/>
    <property type="match status" value="1"/>
</dbReference>
<dbReference type="NCBIfam" id="NF002270">
    <property type="entry name" value="PRK01202.1"/>
    <property type="match status" value="1"/>
</dbReference>
<dbReference type="PANTHER" id="PTHR11715">
    <property type="entry name" value="GLYCINE CLEAVAGE SYSTEM H PROTEIN"/>
    <property type="match status" value="1"/>
</dbReference>
<dbReference type="PANTHER" id="PTHR11715:SF3">
    <property type="entry name" value="GLYCINE CLEAVAGE SYSTEM H PROTEIN-RELATED"/>
    <property type="match status" value="1"/>
</dbReference>
<dbReference type="Pfam" id="PF01597">
    <property type="entry name" value="GCV_H"/>
    <property type="match status" value="1"/>
</dbReference>
<dbReference type="SUPFAM" id="SSF51230">
    <property type="entry name" value="Single hybrid motif"/>
    <property type="match status" value="1"/>
</dbReference>
<dbReference type="PROSITE" id="PS50968">
    <property type="entry name" value="BIOTINYL_LIPOYL"/>
    <property type="match status" value="1"/>
</dbReference>
<dbReference type="PROSITE" id="PS00189">
    <property type="entry name" value="LIPOYL"/>
    <property type="match status" value="1"/>
</dbReference>
<proteinExistence type="inferred from homology"/>
<comment type="function">
    <text evidence="1">The glycine cleavage system catalyzes the degradation of glycine. The H protein shuttles the methylamine group of glycine from the P protein to the T protein.</text>
</comment>
<comment type="cofactor">
    <cofactor evidence="1">
        <name>(R)-lipoate</name>
        <dbReference type="ChEBI" id="CHEBI:83088"/>
    </cofactor>
    <text evidence="1">Binds 1 lipoyl cofactor covalently.</text>
</comment>
<comment type="subunit">
    <text evidence="1">The glycine cleavage system is composed of four proteins: P, T, L and H.</text>
</comment>
<comment type="similarity">
    <text evidence="1">Belongs to the GcvH family.</text>
</comment>
<evidence type="ECO:0000255" key="1">
    <source>
        <dbReference type="HAMAP-Rule" id="MF_00272"/>
    </source>
</evidence>
<evidence type="ECO:0000255" key="2">
    <source>
        <dbReference type="PROSITE-ProRule" id="PRU01066"/>
    </source>
</evidence>
<sequence>MKIPADLYYSPSHEWVRVEGDQAWIGISDYAQHELGDIVFVEMPEPDDELEAGGQLGVIESVKAASTIYSPVGGTVVAINEELEDAPQLINEDPYANYIVVVAMNNPGDLDNLLSAAAYEELCQKEQGGE</sequence>
<feature type="chain" id="PRO_1000022206" description="Glycine cleavage system H protein">
    <location>
        <begin position="1"/>
        <end position="130"/>
    </location>
</feature>
<feature type="domain" description="Lipoyl-binding" evidence="2">
    <location>
        <begin position="22"/>
        <end position="103"/>
    </location>
</feature>
<feature type="modified residue" description="N6-lipoyllysine" evidence="1">
    <location>
        <position position="63"/>
    </location>
</feature>
<accession>Q0AVH7</accession>
<protein>
    <recommendedName>
        <fullName evidence="1">Glycine cleavage system H protein</fullName>
    </recommendedName>
</protein>